<organism>
    <name type="scientific">Oryza sativa subsp. japonica</name>
    <name type="common">Rice</name>
    <dbReference type="NCBI Taxonomy" id="39947"/>
    <lineage>
        <taxon>Eukaryota</taxon>
        <taxon>Viridiplantae</taxon>
        <taxon>Streptophyta</taxon>
        <taxon>Embryophyta</taxon>
        <taxon>Tracheophyta</taxon>
        <taxon>Spermatophyta</taxon>
        <taxon>Magnoliopsida</taxon>
        <taxon>Liliopsida</taxon>
        <taxon>Poales</taxon>
        <taxon>Poaceae</taxon>
        <taxon>BOP clade</taxon>
        <taxon>Oryzoideae</taxon>
        <taxon>Oryzeae</taxon>
        <taxon>Oryzinae</taxon>
        <taxon>Oryza</taxon>
        <taxon>Oryza sativa</taxon>
    </lineage>
</organism>
<protein>
    <recommendedName>
        <fullName>Zinc finger CCCH domain-containing protein 23</fullName>
        <shortName>OsC3H23</shortName>
    </recommendedName>
</protein>
<name>C3H23_ORYSJ</name>
<sequence>MDAYEATKVVFSRIQALDPDHAAKIMGLLLIQDHGDKEMIRLAFGPEALLHSVMAQARKELALLPPPQAASSSPTVPAAHSPFLLSRQNSGRCPAPSPSSWAQAQPFSRSNSMGNGGAADEMVGAGEELMSPLNGGGGAAANAPPFFPRGGDALLDDFELQEQLAFLHDGAGGVNPGHALQAFDGAECRSPGPGESGGMLPYGLAWANGGPGHRRSASVNELCLGGDGFGWKPCLYYARGFCKNGSTCRFVHGGLSDDAAMDATTAEQQQCQDFLLRSKSQRLGPAAFPFTPTGSLPASPSATSKCLSLLLQQQQQHNDNQRAAAAALMLAGGDEAHKFMGRPRLDRVDFASMMNPGSRQIYLTFPADSTFREEDVSNYFSIYGPVHDVRIPYQQKRMFGFVTFVYPETVKLILAKGNPHFICDARVLVKPYKEKGKVPDKYRKQQQGDFCCMSPTGLDARDPFDFHQLGARMLQHSNSANELMLRRKLEEQQQAAELQQAIDLHSRRLIGLQLLDLKSSAAVHAAETTTMSLPTPITNAFTSGQPGATTIVESPPSSTGQLMASCGSPSEGKVVNGGNKADSAGEVTRNADSDQSGEHNLPDSPFASSTKSTAFFTATAATAIGSEGDFTTGSSCNIGGSAVGSANPLRPPTLDIPSPRTCFFPMPRLSEHGAIGM</sequence>
<proteinExistence type="evidence at transcript level"/>
<comment type="sequence caution" evidence="5">
    <conflict type="frameshift">
        <sequence resource="EMBL" id="AK102918"/>
    </conflict>
</comment>
<feature type="chain" id="PRO_0000346819" description="Zinc finger CCCH domain-containing protein 23">
    <location>
        <begin position="1"/>
        <end position="677"/>
    </location>
</feature>
<feature type="domain" description="RRM" evidence="2">
    <location>
        <begin position="359"/>
        <end position="435"/>
    </location>
</feature>
<feature type="zinc finger region" description="C3H1-type" evidence="3">
    <location>
        <begin position="228"/>
        <end position="255"/>
    </location>
</feature>
<feature type="region of interest" description="Disordered" evidence="4">
    <location>
        <begin position="66"/>
        <end position="117"/>
    </location>
</feature>
<feature type="region of interest" description="Disordered" evidence="4">
    <location>
        <begin position="535"/>
        <end position="607"/>
    </location>
</feature>
<feature type="coiled-coil region" evidence="1">
    <location>
        <begin position="480"/>
        <end position="513"/>
    </location>
</feature>
<feature type="compositionally biased region" description="Low complexity" evidence="4">
    <location>
        <begin position="69"/>
        <end position="82"/>
    </location>
</feature>
<feature type="compositionally biased region" description="Polar residues" evidence="4">
    <location>
        <begin position="98"/>
        <end position="113"/>
    </location>
</feature>
<feature type="compositionally biased region" description="Polar residues" evidence="4">
    <location>
        <begin position="535"/>
        <end position="562"/>
    </location>
</feature>
<feature type="compositionally biased region" description="Basic and acidic residues" evidence="4">
    <location>
        <begin position="589"/>
        <end position="601"/>
    </location>
</feature>
<feature type="sequence conflict" description="In Ref. 5; AK102918." evidence="5" ref="5">
    <original>P</original>
    <variation>T</variation>
    <location>
        <position position="193"/>
    </location>
</feature>
<reference key="1">
    <citation type="journal article" date="2005" name="Genome Res.">
        <title>Sequence, annotation, and analysis of synteny between rice chromosome 3 and diverged grass species.</title>
        <authorList>
            <consortium name="The rice chromosome 3 sequencing consortium"/>
            <person name="Buell C.R."/>
            <person name="Yuan Q."/>
            <person name="Ouyang S."/>
            <person name="Liu J."/>
            <person name="Zhu W."/>
            <person name="Wang A."/>
            <person name="Maiti R."/>
            <person name="Haas B."/>
            <person name="Wortman J."/>
            <person name="Pertea M."/>
            <person name="Jones K.M."/>
            <person name="Kim M."/>
            <person name="Overton L."/>
            <person name="Tsitrin T."/>
            <person name="Fadrosh D."/>
            <person name="Bera J."/>
            <person name="Weaver B."/>
            <person name="Jin S."/>
            <person name="Johri S."/>
            <person name="Reardon M."/>
            <person name="Webb K."/>
            <person name="Hill J."/>
            <person name="Moffat K."/>
            <person name="Tallon L."/>
            <person name="Van Aken S."/>
            <person name="Lewis M."/>
            <person name="Utterback T."/>
            <person name="Feldblyum T."/>
            <person name="Zismann V."/>
            <person name="Iobst S."/>
            <person name="Hsiao J."/>
            <person name="de Vazeille A.R."/>
            <person name="Salzberg S.L."/>
            <person name="White O."/>
            <person name="Fraser C.M."/>
            <person name="Yu Y."/>
            <person name="Kim H."/>
            <person name="Rambo T."/>
            <person name="Currie J."/>
            <person name="Collura K."/>
            <person name="Kernodle-Thompson S."/>
            <person name="Wei F."/>
            <person name="Kudrna K."/>
            <person name="Ammiraju J.S.S."/>
            <person name="Luo M."/>
            <person name="Goicoechea J.L."/>
            <person name="Wing R.A."/>
            <person name="Henry D."/>
            <person name="Oates R."/>
            <person name="Palmer M."/>
            <person name="Pries G."/>
            <person name="Saski C."/>
            <person name="Simmons J."/>
            <person name="Soderlund C."/>
            <person name="Nelson W."/>
            <person name="de la Bastide M."/>
            <person name="Spiegel L."/>
            <person name="Nascimento L."/>
            <person name="Huang E."/>
            <person name="Preston R."/>
            <person name="Zutavern T."/>
            <person name="Palmer L."/>
            <person name="O'Shaughnessy A."/>
            <person name="Dike S."/>
            <person name="McCombie W.R."/>
            <person name="Minx P."/>
            <person name="Cordum H."/>
            <person name="Wilson R."/>
            <person name="Jin W."/>
            <person name="Lee H.R."/>
            <person name="Jiang J."/>
            <person name="Jackson S."/>
        </authorList>
    </citation>
    <scope>NUCLEOTIDE SEQUENCE [LARGE SCALE GENOMIC DNA]</scope>
    <source>
        <strain>cv. Nipponbare</strain>
    </source>
</reference>
<reference key="2">
    <citation type="journal article" date="2005" name="Nature">
        <title>The map-based sequence of the rice genome.</title>
        <authorList>
            <consortium name="International rice genome sequencing project (IRGSP)"/>
        </authorList>
    </citation>
    <scope>NUCLEOTIDE SEQUENCE [LARGE SCALE GENOMIC DNA]</scope>
    <source>
        <strain>cv. Nipponbare</strain>
    </source>
</reference>
<reference key="3">
    <citation type="journal article" date="2008" name="Nucleic Acids Res.">
        <title>The rice annotation project database (RAP-DB): 2008 update.</title>
        <authorList>
            <consortium name="The rice annotation project (RAP)"/>
        </authorList>
    </citation>
    <scope>GENOME REANNOTATION</scope>
    <source>
        <strain>cv. Nipponbare</strain>
    </source>
</reference>
<reference key="4">
    <citation type="journal article" date="2013" name="Rice">
        <title>Improvement of the Oryza sativa Nipponbare reference genome using next generation sequence and optical map data.</title>
        <authorList>
            <person name="Kawahara Y."/>
            <person name="de la Bastide M."/>
            <person name="Hamilton J.P."/>
            <person name="Kanamori H."/>
            <person name="McCombie W.R."/>
            <person name="Ouyang S."/>
            <person name="Schwartz D.C."/>
            <person name="Tanaka T."/>
            <person name="Wu J."/>
            <person name="Zhou S."/>
            <person name="Childs K.L."/>
            <person name="Davidson R.M."/>
            <person name="Lin H."/>
            <person name="Quesada-Ocampo L."/>
            <person name="Vaillancourt B."/>
            <person name="Sakai H."/>
            <person name="Lee S.S."/>
            <person name="Kim J."/>
            <person name="Numa H."/>
            <person name="Itoh T."/>
            <person name="Buell C.R."/>
            <person name="Matsumoto T."/>
        </authorList>
    </citation>
    <scope>GENOME REANNOTATION</scope>
    <source>
        <strain>cv. Nipponbare</strain>
    </source>
</reference>
<reference key="5">
    <citation type="journal article" date="2003" name="Science">
        <title>Collection, mapping, and annotation of over 28,000 cDNA clones from japonica rice.</title>
        <authorList>
            <consortium name="The rice full-length cDNA consortium"/>
        </authorList>
    </citation>
    <scope>NUCLEOTIDE SEQUENCE [LARGE SCALE MRNA]</scope>
    <source>
        <strain>cv. Nipponbare</strain>
    </source>
</reference>
<reference key="6">
    <citation type="journal article" date="2008" name="BMC Genomics">
        <title>Genome-wide analysis of CCCH zinc finger family in Arabidopsis and rice.</title>
        <authorList>
            <person name="Wang D."/>
            <person name="Guo Y."/>
            <person name="Wu C."/>
            <person name="Yang G."/>
            <person name="Li Y."/>
            <person name="Zheng C."/>
        </authorList>
    </citation>
    <scope>NOMENCLATURE</scope>
</reference>
<evidence type="ECO:0000255" key="1"/>
<evidence type="ECO:0000255" key="2">
    <source>
        <dbReference type="PROSITE-ProRule" id="PRU00176"/>
    </source>
</evidence>
<evidence type="ECO:0000255" key="3">
    <source>
        <dbReference type="PROSITE-ProRule" id="PRU00723"/>
    </source>
</evidence>
<evidence type="ECO:0000256" key="4">
    <source>
        <dbReference type="SAM" id="MobiDB-lite"/>
    </source>
</evidence>
<evidence type="ECO:0000305" key="5"/>
<dbReference type="EMBL" id="DP000009">
    <property type="protein sequence ID" value="ABF95739.1"/>
    <property type="molecule type" value="Genomic_DNA"/>
</dbReference>
<dbReference type="EMBL" id="DP000009">
    <property type="protein sequence ID" value="ABF95740.1"/>
    <property type="molecule type" value="Genomic_DNA"/>
</dbReference>
<dbReference type="EMBL" id="AP008209">
    <property type="protein sequence ID" value="BAF11917.1"/>
    <property type="molecule type" value="Genomic_DNA"/>
</dbReference>
<dbReference type="EMBL" id="AP014959">
    <property type="protein sequence ID" value="BAS84016.1"/>
    <property type="molecule type" value="Genomic_DNA"/>
</dbReference>
<dbReference type="EMBL" id="AK102918">
    <property type="status" value="NOT_ANNOTATED_CDS"/>
    <property type="molecule type" value="mRNA"/>
</dbReference>
<dbReference type="RefSeq" id="XP_015632786.1">
    <property type="nucleotide sequence ID" value="XM_015777300.1"/>
</dbReference>
<dbReference type="RefSeq" id="XP_015632787.1">
    <property type="nucleotide sequence ID" value="XM_015777301.1"/>
</dbReference>
<dbReference type="SMR" id="Q10LZ9"/>
<dbReference type="FunCoup" id="Q10LZ9">
    <property type="interactions" value="1550"/>
</dbReference>
<dbReference type="STRING" id="39947.Q10LZ9"/>
<dbReference type="PaxDb" id="39947-Q10LZ9"/>
<dbReference type="EnsemblPlants" id="Os03t0329200-01">
    <property type="protein sequence ID" value="Os03t0329200-01"/>
    <property type="gene ID" value="Os03g0329200"/>
</dbReference>
<dbReference type="Gramene" id="Os03t0329200-01">
    <property type="protein sequence ID" value="Os03t0329200-01"/>
    <property type="gene ID" value="Os03g0329200"/>
</dbReference>
<dbReference type="KEGG" id="dosa:Os03g0329200"/>
<dbReference type="eggNOG" id="ENOG502QWIK">
    <property type="taxonomic scope" value="Eukaryota"/>
</dbReference>
<dbReference type="HOGENOM" id="CLU_028778_0_0_1"/>
<dbReference type="InParanoid" id="Q10LZ9"/>
<dbReference type="OMA" id="NSGRCPA"/>
<dbReference type="OrthoDB" id="1897736at2759"/>
<dbReference type="Proteomes" id="UP000000763">
    <property type="component" value="Chromosome 3"/>
</dbReference>
<dbReference type="Proteomes" id="UP000059680">
    <property type="component" value="Chromosome 3"/>
</dbReference>
<dbReference type="ExpressionAtlas" id="Q10LZ9">
    <property type="expression patterns" value="baseline and differential"/>
</dbReference>
<dbReference type="GO" id="GO:0003677">
    <property type="term" value="F:DNA binding"/>
    <property type="evidence" value="ECO:0007669"/>
    <property type="project" value="UniProtKB-KW"/>
</dbReference>
<dbReference type="GO" id="GO:0003723">
    <property type="term" value="F:RNA binding"/>
    <property type="evidence" value="ECO:0007669"/>
    <property type="project" value="UniProtKB-KW"/>
</dbReference>
<dbReference type="GO" id="GO:0008270">
    <property type="term" value="F:zinc ion binding"/>
    <property type="evidence" value="ECO:0007669"/>
    <property type="project" value="UniProtKB-KW"/>
</dbReference>
<dbReference type="CDD" id="cd12458">
    <property type="entry name" value="RRM_AtC3H46_like"/>
    <property type="match status" value="1"/>
</dbReference>
<dbReference type="FunFam" id="3.30.70.330:FF:000678">
    <property type="entry name" value="zinc finger CCCH domain-containing protein 53-like isoform X2"/>
    <property type="match status" value="1"/>
</dbReference>
<dbReference type="Gene3D" id="3.30.1370.210">
    <property type="match status" value="1"/>
</dbReference>
<dbReference type="Gene3D" id="3.30.70.330">
    <property type="match status" value="1"/>
</dbReference>
<dbReference type="InterPro" id="IPR056276">
    <property type="entry name" value="AtC3H46-like_PABC-like"/>
</dbReference>
<dbReference type="InterPro" id="IPR034365">
    <property type="entry name" value="AtC3H46-like_RRM"/>
</dbReference>
<dbReference type="InterPro" id="IPR012677">
    <property type="entry name" value="Nucleotide-bd_a/b_plait_sf"/>
</dbReference>
<dbReference type="InterPro" id="IPR035979">
    <property type="entry name" value="RBD_domain_sf"/>
</dbReference>
<dbReference type="InterPro" id="IPR000504">
    <property type="entry name" value="RRM_dom"/>
</dbReference>
<dbReference type="InterPro" id="IPR000571">
    <property type="entry name" value="Znf_CCCH"/>
</dbReference>
<dbReference type="PANTHER" id="PTHR24009">
    <property type="entry name" value="RNA-BINDING (RRM/RBD/RNP MOTIFS)"/>
    <property type="match status" value="1"/>
</dbReference>
<dbReference type="PANTHER" id="PTHR24009:SF47">
    <property type="entry name" value="ZINC FINGER CCCH DOMAIN-CONTAINING PROTEIN 22"/>
    <property type="match status" value="1"/>
</dbReference>
<dbReference type="Pfam" id="PF23182">
    <property type="entry name" value="PABC_AtC3H46"/>
    <property type="match status" value="1"/>
</dbReference>
<dbReference type="Pfam" id="PF00076">
    <property type="entry name" value="RRM_1"/>
    <property type="match status" value="1"/>
</dbReference>
<dbReference type="Pfam" id="PF00642">
    <property type="entry name" value="zf-CCCH"/>
    <property type="match status" value="1"/>
</dbReference>
<dbReference type="SMART" id="SM00360">
    <property type="entry name" value="RRM"/>
    <property type="match status" value="1"/>
</dbReference>
<dbReference type="SMART" id="SM00356">
    <property type="entry name" value="ZnF_C3H1"/>
    <property type="match status" value="1"/>
</dbReference>
<dbReference type="SUPFAM" id="SSF54928">
    <property type="entry name" value="RNA-binding domain, RBD"/>
    <property type="match status" value="1"/>
</dbReference>
<dbReference type="PROSITE" id="PS50102">
    <property type="entry name" value="RRM"/>
    <property type="match status" value="1"/>
</dbReference>
<dbReference type="PROSITE" id="PS50103">
    <property type="entry name" value="ZF_C3H1"/>
    <property type="match status" value="1"/>
</dbReference>
<gene>
    <name type="ordered locus">Os03g0329200</name>
    <name type="ordered locus">LOC_Os03g21160</name>
</gene>
<accession>Q10LZ9</accession>
<accession>F4MFP3</accession>
<keyword id="KW-0175">Coiled coil</keyword>
<keyword id="KW-0238">DNA-binding</keyword>
<keyword id="KW-0479">Metal-binding</keyword>
<keyword id="KW-1185">Reference proteome</keyword>
<keyword id="KW-0694">RNA-binding</keyword>
<keyword id="KW-0862">Zinc</keyword>
<keyword id="KW-0863">Zinc-finger</keyword>